<name>MLTF_YERPG</name>
<organism>
    <name type="scientific">Yersinia pestis bv. Antiqua (strain Angola)</name>
    <dbReference type="NCBI Taxonomy" id="349746"/>
    <lineage>
        <taxon>Bacteria</taxon>
        <taxon>Pseudomonadati</taxon>
        <taxon>Pseudomonadota</taxon>
        <taxon>Gammaproteobacteria</taxon>
        <taxon>Enterobacterales</taxon>
        <taxon>Yersiniaceae</taxon>
        <taxon>Yersinia</taxon>
    </lineage>
</organism>
<evidence type="ECO:0000255" key="1">
    <source>
        <dbReference type="HAMAP-Rule" id="MF_02016"/>
    </source>
</evidence>
<sequence>MTRIKLSYFTIGLVALLLALALWPNIPWRNGQEGQLDQIKARGELRVSTISSPLIYSTEKDTPSGFDYELAKRFADYLGVKLVIIPHHNIDDLFDALDNDDTDLLAAGLIYNRERLNRARTGPAYYSVSQQLVYRLGSPRPKSFSDLKGQVVVASGSAHMTTLKRLKQTKYPELNWSSSVDKSGKELLEQVAEGKLDYTLGDSATIALLQRIHPQLAVAFDVTDEEPVTWYFKQSDDDSLYAAMLDFYSEMVEDGSLARLEEKYLGHVGSFDYVDTKTFLSAIDNVLPSYQHLFEKHAGDIDWKLLAVIAYQESHWNPQATSPTGVRGLMMLTRATADGLGVKDRVDPEESIRGGAIYLQRLMKKLPETIPEDERIWFALAAYNLGYGHMLDARRLTKNQNGNPDSWVDVKMRLPMLSQKRYYPSTTYGYARGHEAYNYVENIRRYQVSLVGYLQEKEKKAAQHAAIEAELGKSNPVVGPGWSIGD</sequence>
<comment type="function">
    <text evidence="1">Murein-degrading enzyme that degrades murein glycan strands and insoluble, high-molecular weight murein sacculi, with the concomitant formation of a 1,6-anhydromuramoyl product. Lytic transglycosylases (LTs) play an integral role in the metabolism of the peptidoglycan (PG) sacculus. Their lytic action creates space within the PG sacculus to allow for its expansion as well as for the insertion of various structures such as secretion systems and flagella.</text>
</comment>
<comment type="catalytic activity">
    <reaction evidence="1">
        <text>Exolytic cleavage of the (1-&gt;4)-beta-glycosidic linkage between N-acetylmuramic acid (MurNAc) and N-acetylglucosamine (GlcNAc) residues in peptidoglycan, from either the reducing or the non-reducing ends of the peptidoglycan chains, with concomitant formation of a 1,6-anhydrobond in the MurNAc residue.</text>
        <dbReference type="EC" id="4.2.2.n1"/>
    </reaction>
</comment>
<comment type="subcellular location">
    <subcellularLocation>
        <location>Cell outer membrane</location>
        <topology>Peripheral membrane protein</topology>
    </subcellularLocation>
    <text evidence="1">Attached to the inner leaflet of the outer membrane.</text>
</comment>
<comment type="domain">
    <text evidence="1">The N-terminal domain does not have lytic activity and probably modulates enzymatic activity. The C-terminal domain is the catalytic active domain.</text>
</comment>
<comment type="similarity">
    <text evidence="1">In the N-terminal section; belongs to the bacterial solute-binding protein 3 family.</text>
</comment>
<comment type="similarity">
    <text evidence="1">In the C-terminal section; belongs to the transglycosylase Slt family.</text>
</comment>
<accession>A9R413</accession>
<keyword id="KW-0998">Cell outer membrane</keyword>
<keyword id="KW-0961">Cell wall biogenesis/degradation</keyword>
<keyword id="KW-0456">Lyase</keyword>
<keyword id="KW-0472">Membrane</keyword>
<keyword id="KW-0732">Signal</keyword>
<gene>
    <name evidence="1" type="primary">mltF</name>
    <name type="ordered locus">YpAngola_A3622</name>
</gene>
<dbReference type="EC" id="4.2.2.n1" evidence="1"/>
<dbReference type="EMBL" id="CP000901">
    <property type="protein sequence ID" value="ABX85250.1"/>
    <property type="molecule type" value="Genomic_DNA"/>
</dbReference>
<dbReference type="RefSeq" id="WP_002211562.1">
    <property type="nucleotide sequence ID" value="NZ_CP009935.1"/>
</dbReference>
<dbReference type="SMR" id="A9R413"/>
<dbReference type="CAZy" id="GH23">
    <property type="family name" value="Glycoside Hydrolase Family 23"/>
</dbReference>
<dbReference type="GeneID" id="57975876"/>
<dbReference type="KEGG" id="ypg:YpAngola_A3622"/>
<dbReference type="PATRIC" id="fig|349746.12.peg.322"/>
<dbReference type="GO" id="GO:0009279">
    <property type="term" value="C:cell outer membrane"/>
    <property type="evidence" value="ECO:0007669"/>
    <property type="project" value="UniProtKB-SubCell"/>
</dbReference>
<dbReference type="GO" id="GO:0008933">
    <property type="term" value="F:peptidoglycan lytic transglycosylase activity"/>
    <property type="evidence" value="ECO:0007669"/>
    <property type="project" value="UniProtKB-UniRule"/>
</dbReference>
<dbReference type="GO" id="GO:0016998">
    <property type="term" value="P:cell wall macromolecule catabolic process"/>
    <property type="evidence" value="ECO:0007669"/>
    <property type="project" value="UniProtKB-UniRule"/>
</dbReference>
<dbReference type="GO" id="GO:0071555">
    <property type="term" value="P:cell wall organization"/>
    <property type="evidence" value="ECO:0007669"/>
    <property type="project" value="UniProtKB-KW"/>
</dbReference>
<dbReference type="GO" id="GO:0009253">
    <property type="term" value="P:peptidoglycan catabolic process"/>
    <property type="evidence" value="ECO:0007669"/>
    <property type="project" value="TreeGrafter"/>
</dbReference>
<dbReference type="CDD" id="cd13403">
    <property type="entry name" value="MLTF-like"/>
    <property type="match status" value="1"/>
</dbReference>
<dbReference type="CDD" id="cd01009">
    <property type="entry name" value="PBP2_YfhD_N"/>
    <property type="match status" value="1"/>
</dbReference>
<dbReference type="FunFam" id="1.10.530.10:FF:000003">
    <property type="entry name" value="Membrane-bound lytic murein transglycosylase F"/>
    <property type="match status" value="1"/>
</dbReference>
<dbReference type="Gene3D" id="1.10.530.10">
    <property type="match status" value="1"/>
</dbReference>
<dbReference type="Gene3D" id="3.40.190.10">
    <property type="entry name" value="Periplasmic binding protein-like II"/>
    <property type="match status" value="2"/>
</dbReference>
<dbReference type="HAMAP" id="MF_02016">
    <property type="entry name" value="MltF"/>
    <property type="match status" value="1"/>
</dbReference>
<dbReference type="InterPro" id="IPR023346">
    <property type="entry name" value="Lysozyme-like_dom_sf"/>
</dbReference>
<dbReference type="InterPro" id="IPR023703">
    <property type="entry name" value="MltF"/>
</dbReference>
<dbReference type="InterPro" id="IPR001638">
    <property type="entry name" value="Solute-binding_3/MltF_N"/>
</dbReference>
<dbReference type="InterPro" id="IPR000189">
    <property type="entry name" value="Transglyc_AS"/>
</dbReference>
<dbReference type="InterPro" id="IPR008258">
    <property type="entry name" value="Transglycosylase_SLT_dom_1"/>
</dbReference>
<dbReference type="NCBIfam" id="NF008112">
    <property type="entry name" value="PRK10859.1"/>
    <property type="match status" value="1"/>
</dbReference>
<dbReference type="PANTHER" id="PTHR35936">
    <property type="entry name" value="MEMBRANE-BOUND LYTIC MUREIN TRANSGLYCOSYLASE F"/>
    <property type="match status" value="1"/>
</dbReference>
<dbReference type="PANTHER" id="PTHR35936:SF32">
    <property type="entry name" value="MEMBRANE-BOUND LYTIC MUREIN TRANSGLYCOSYLASE F"/>
    <property type="match status" value="1"/>
</dbReference>
<dbReference type="Pfam" id="PF00497">
    <property type="entry name" value="SBP_bac_3"/>
    <property type="match status" value="1"/>
</dbReference>
<dbReference type="Pfam" id="PF01464">
    <property type="entry name" value="SLT"/>
    <property type="match status" value="1"/>
</dbReference>
<dbReference type="SMART" id="SM00062">
    <property type="entry name" value="PBPb"/>
    <property type="match status" value="1"/>
</dbReference>
<dbReference type="SUPFAM" id="SSF53955">
    <property type="entry name" value="Lysozyme-like"/>
    <property type="match status" value="1"/>
</dbReference>
<dbReference type="SUPFAM" id="SSF53850">
    <property type="entry name" value="Periplasmic binding protein-like II"/>
    <property type="match status" value="1"/>
</dbReference>
<dbReference type="PROSITE" id="PS00922">
    <property type="entry name" value="TRANSGLYCOSYLASE"/>
    <property type="match status" value="1"/>
</dbReference>
<feature type="signal peptide" evidence="1">
    <location>
        <begin position="1"/>
        <end position="21"/>
    </location>
</feature>
<feature type="chain" id="PRO_0000354000" description="Membrane-bound lytic murein transglycosylase F">
    <location>
        <begin position="22"/>
        <end position="486"/>
    </location>
</feature>
<feature type="region of interest" description="Non-LT domain" evidence="1">
    <location>
        <begin position="22"/>
        <end position="268"/>
    </location>
</feature>
<feature type="region of interest" description="LT domain" evidence="1">
    <location>
        <begin position="269"/>
        <end position="486"/>
    </location>
</feature>
<feature type="active site" evidence="1">
    <location>
        <position position="313"/>
    </location>
</feature>
<proteinExistence type="inferred from homology"/>
<protein>
    <recommendedName>
        <fullName evidence="1">Membrane-bound lytic murein transglycosylase F</fullName>
        <ecNumber evidence="1">4.2.2.n1</ecNumber>
    </recommendedName>
    <alternativeName>
        <fullName evidence="1">Murein lyase F</fullName>
    </alternativeName>
</protein>
<reference key="1">
    <citation type="journal article" date="2010" name="J. Bacteriol.">
        <title>Genome sequence of the deep-rooted Yersinia pestis strain Angola reveals new insights into the evolution and pangenome of the plague bacterium.</title>
        <authorList>
            <person name="Eppinger M."/>
            <person name="Worsham P.L."/>
            <person name="Nikolich M.P."/>
            <person name="Riley D.R."/>
            <person name="Sebastian Y."/>
            <person name="Mou S."/>
            <person name="Achtman M."/>
            <person name="Lindler L.E."/>
            <person name="Ravel J."/>
        </authorList>
    </citation>
    <scope>NUCLEOTIDE SEQUENCE [LARGE SCALE GENOMIC DNA]</scope>
    <source>
        <strain>Angola</strain>
    </source>
</reference>